<evidence type="ECO:0000250" key="1">
    <source>
        <dbReference type="UniProtKB" id="P53254"/>
    </source>
</evidence>
<evidence type="ECO:0000255" key="2"/>
<evidence type="ECO:0000256" key="3">
    <source>
        <dbReference type="SAM" id="MobiDB-lite"/>
    </source>
</evidence>
<evidence type="ECO:0000269" key="4">
    <source>
    </source>
</evidence>
<evidence type="ECO:0000305" key="5"/>
<evidence type="ECO:0000312" key="6">
    <source>
        <dbReference type="EMBL" id="CAA22881.1"/>
    </source>
</evidence>
<sequence length="1097" mass="126081">MNGLKREHESSSSQDGSKTPETEYDSHVDSIEDIHSLASKRKKLNEKKENLEDLTLLKTSAFELKLNELIREISVRGKYFRHANTFVEKIKDLIFKTPVIPETNFWSACKNLEKDKKVIVPLAEPLSAKDTNLRASFVPPKTVTPGIFSCSNKFFLNPDGWSYDLFLEIPESIFTQKDYLNGRYFRKRAFYLTCIAKHLLENLGNEVKLEFVAFNDDIRRPILAILPESKGFAATGKRFTVFLIPTVRQIFPVSKLLPHKNAIRDFMEHEELKPTPFYNNSVLEEQNLLFYRDLVKKYSVNPQFLDACGLGSTWLNMRGFSSSIHSNGFGLLEWYVLMALLMSSTGLPAGNVLNTYLTAAQFFKSMLQFLSSKNLTSTLFKLNADSSNLKIGNGHLPTLIDCNTGFNLLGKMKQSFFEYFQASCRHTLNLLDENANYNFSKIFITHVNVPALEFDVSGCIPLEPKELEDPNFCRKTDLDSPYSLYLEYTWDLLQHALGDRVCQIILYSSICTSCSINESLKTKLPKLISFGLLLNPDALLRLVDIGPSPDDTVGSQKFREFWGEVSELRKFKNGSIAESVYWECSSPDERIRIPQRIIRHILNRHLGNNVGDRVSFRNEKFRVYVHSKISPNTDTYNEYVPVMEAYNEAVKSLINLSDIPLSIAEILPADESLRYSSSSVPFYESSTCAPIDVVFQFESSSKWPDELEGIQRTKIAFLLKIAELLEALDNVERASVGLENTDNPTHNCCFLQVLFSNNFTFRYRLRNDREIFFWKSLERNPSTKLSAQKGLYAYEHMFQFIPRHTLAIQAICQAHRSYSMAVRLAKHWFYSHLLTDHVTDEVIELLVASVYINSSSWRTTSSGETSFCRMLHFLAHWDWRFDPLIINSNGKLPHDVRHQATEKLESIRKQDVAIAHNAYYIITDYDFDGNHIGYYKPSKIIANRITSLARASLSELLKDTPNYKSIFKSSLDIYHVVIDVNINKLPMYRESNLTKYKNLQNMSSERPGFEPITEFVKELHRCFEDTISFFYNKKNPKVVTGVFNPRILANRPYRTNIDYPFKVVDKDTVVLDADVVCEEIRQVGGDLIRSIQLQLKA</sequence>
<keyword id="KW-0539">Nucleus</keyword>
<keyword id="KW-1185">Reference proteome</keyword>
<keyword id="KW-0687">Ribonucleoprotein</keyword>
<keyword id="KW-0690">Ribosome biogenesis</keyword>
<keyword id="KW-0694">RNA-binding</keyword>
<keyword id="KW-0698">rRNA processing</keyword>
<feature type="chain" id="PRO_0000317218" description="U3 small nucleolar RNA-associated protein 22">
    <location>
        <begin position="1"/>
        <end position="1097"/>
    </location>
</feature>
<feature type="region of interest" description="Disordered" evidence="3">
    <location>
        <begin position="1"/>
        <end position="27"/>
    </location>
</feature>
<feature type="compositionally biased region" description="Basic and acidic residues" evidence="3">
    <location>
        <begin position="1"/>
        <end position="10"/>
    </location>
</feature>
<feature type="compositionally biased region" description="Basic and acidic residues" evidence="3">
    <location>
        <begin position="18"/>
        <end position="27"/>
    </location>
</feature>
<comment type="function">
    <text evidence="1">Involved in nucleolar processing of pre-18S ribosomal RNA and ribosome assembly.</text>
</comment>
<comment type="subunit">
    <text evidence="1">Component of the ribosomal small subunit (SSU) processome.</text>
</comment>
<comment type="subcellular location">
    <subcellularLocation>
        <location evidence="4">Nucleus</location>
        <location evidence="4">Nucleolus</location>
    </subcellularLocation>
</comment>
<comment type="similarity">
    <text evidence="2">Belongs to the NRAP family.</text>
</comment>
<accession>O94676</accession>
<name>UTP22_SCHPO</name>
<dbReference type="EMBL" id="CU329671">
    <property type="protein sequence ID" value="CAA22881.1"/>
    <property type="molecule type" value="Genomic_DNA"/>
</dbReference>
<dbReference type="PIR" id="T40678">
    <property type="entry name" value="T40678"/>
</dbReference>
<dbReference type="RefSeq" id="NP_596323.1">
    <property type="nucleotide sequence ID" value="NM_001022245.2"/>
</dbReference>
<dbReference type="SMR" id="O94676"/>
<dbReference type="BioGRID" id="277690">
    <property type="interactions" value="8"/>
</dbReference>
<dbReference type="FunCoup" id="O94676">
    <property type="interactions" value="730"/>
</dbReference>
<dbReference type="STRING" id="284812.O94676"/>
<dbReference type="iPTMnet" id="O94676"/>
<dbReference type="PaxDb" id="4896-SPBC776.08c.1"/>
<dbReference type="EnsemblFungi" id="SPBC776.08c.1">
    <property type="protein sequence ID" value="SPBC776.08c.1:pep"/>
    <property type="gene ID" value="SPBC776.08c"/>
</dbReference>
<dbReference type="GeneID" id="2541176"/>
<dbReference type="KEGG" id="spo:2541176"/>
<dbReference type="PomBase" id="SPBC776.08c">
    <property type="gene designation" value="utp22"/>
</dbReference>
<dbReference type="VEuPathDB" id="FungiDB:SPBC776.08c"/>
<dbReference type="eggNOG" id="KOG2054">
    <property type="taxonomic scope" value="Eukaryota"/>
</dbReference>
<dbReference type="HOGENOM" id="CLU_003502_1_0_1"/>
<dbReference type="InParanoid" id="O94676"/>
<dbReference type="OMA" id="NPHGGKE"/>
<dbReference type="PhylomeDB" id="O94676"/>
<dbReference type="Reactome" id="R-SPO-6791226">
    <property type="pathway name" value="Major pathway of rRNA processing in the nucleolus and cytosol"/>
</dbReference>
<dbReference type="PRO" id="PR:O94676"/>
<dbReference type="Proteomes" id="UP000002485">
    <property type="component" value="Chromosome II"/>
</dbReference>
<dbReference type="GO" id="GO:0032545">
    <property type="term" value="C:CURI complex"/>
    <property type="evidence" value="ECO:0000318"/>
    <property type="project" value="GO_Central"/>
</dbReference>
<dbReference type="GO" id="GO:0005730">
    <property type="term" value="C:nucleolus"/>
    <property type="evidence" value="ECO:0007005"/>
    <property type="project" value="PomBase"/>
</dbReference>
<dbReference type="GO" id="GO:0005634">
    <property type="term" value="C:nucleus"/>
    <property type="evidence" value="ECO:0007005"/>
    <property type="project" value="PomBase"/>
</dbReference>
<dbReference type="GO" id="GO:0032040">
    <property type="term" value="C:small-subunit processome"/>
    <property type="evidence" value="ECO:0000318"/>
    <property type="project" value="GO_Central"/>
</dbReference>
<dbReference type="GO" id="GO:0034456">
    <property type="term" value="C:UTP-C complex"/>
    <property type="evidence" value="ECO:0000318"/>
    <property type="project" value="GO_Central"/>
</dbReference>
<dbReference type="GO" id="GO:0030515">
    <property type="term" value="F:snoRNA binding"/>
    <property type="evidence" value="ECO:0000266"/>
    <property type="project" value="PomBase"/>
</dbReference>
<dbReference type="GO" id="GO:0030490">
    <property type="term" value="P:maturation of SSU-rRNA"/>
    <property type="evidence" value="ECO:0000266"/>
    <property type="project" value="PomBase"/>
</dbReference>
<dbReference type="GO" id="GO:0006364">
    <property type="term" value="P:rRNA processing"/>
    <property type="evidence" value="ECO:0000318"/>
    <property type="project" value="GO_Central"/>
</dbReference>
<dbReference type="GO" id="GO:0006409">
    <property type="term" value="P:tRNA export from nucleus"/>
    <property type="evidence" value="ECO:0000318"/>
    <property type="project" value="GO_Central"/>
</dbReference>
<dbReference type="FunFam" id="1.10.1410.10:FF:000061">
    <property type="entry name" value="U3 small nucleolar RNA-associated protein 22"/>
    <property type="match status" value="1"/>
</dbReference>
<dbReference type="Gene3D" id="1.10.1410.10">
    <property type="match status" value="1"/>
</dbReference>
<dbReference type="Gene3D" id="3.30.70.3030">
    <property type="match status" value="1"/>
</dbReference>
<dbReference type="InterPro" id="IPR005554">
    <property type="entry name" value="NOL6/Upt22"/>
</dbReference>
<dbReference type="InterPro" id="IPR035082">
    <property type="entry name" value="Nrap_D1"/>
</dbReference>
<dbReference type="InterPro" id="IPR035367">
    <property type="entry name" value="Nrap_D2"/>
</dbReference>
<dbReference type="InterPro" id="IPR035368">
    <property type="entry name" value="Nrap_D3"/>
</dbReference>
<dbReference type="InterPro" id="IPR035369">
    <property type="entry name" value="Nrap_D4"/>
</dbReference>
<dbReference type="InterPro" id="IPR035370">
    <property type="entry name" value="Nrap_D5"/>
</dbReference>
<dbReference type="InterPro" id="IPR035371">
    <property type="entry name" value="Nrap_D6"/>
</dbReference>
<dbReference type="PANTHER" id="PTHR17972:SF0">
    <property type="entry name" value="NUCLEOLAR PROTEIN 6"/>
    <property type="match status" value="1"/>
</dbReference>
<dbReference type="PANTHER" id="PTHR17972">
    <property type="entry name" value="NUCLEOLAR RNA-ASSOCIATED PROTEIN"/>
    <property type="match status" value="1"/>
</dbReference>
<dbReference type="Pfam" id="PF03813">
    <property type="entry name" value="Nrap"/>
    <property type="match status" value="1"/>
</dbReference>
<dbReference type="Pfam" id="PF17403">
    <property type="entry name" value="Nrap_D2"/>
    <property type="match status" value="1"/>
</dbReference>
<dbReference type="Pfam" id="PF17404">
    <property type="entry name" value="Nrap_D3"/>
    <property type="match status" value="1"/>
</dbReference>
<dbReference type="Pfam" id="PF17405">
    <property type="entry name" value="Nrap_D4"/>
    <property type="match status" value="1"/>
</dbReference>
<dbReference type="Pfam" id="PF17406">
    <property type="entry name" value="Nrap_D5"/>
    <property type="match status" value="1"/>
</dbReference>
<dbReference type="Pfam" id="PF17407">
    <property type="entry name" value="Nrap_D6"/>
    <property type="match status" value="1"/>
</dbReference>
<reference evidence="6" key="1">
    <citation type="journal article" date="2002" name="Nature">
        <title>The genome sequence of Schizosaccharomyces pombe.</title>
        <authorList>
            <person name="Wood V."/>
            <person name="Gwilliam R."/>
            <person name="Rajandream M.A."/>
            <person name="Lyne M.H."/>
            <person name="Lyne R."/>
            <person name="Stewart A."/>
            <person name="Sgouros J.G."/>
            <person name="Peat N."/>
            <person name="Hayles J."/>
            <person name="Baker S.G."/>
            <person name="Basham D."/>
            <person name="Bowman S."/>
            <person name="Brooks K."/>
            <person name="Brown D."/>
            <person name="Brown S."/>
            <person name="Chillingworth T."/>
            <person name="Churcher C.M."/>
            <person name="Collins M."/>
            <person name="Connor R."/>
            <person name="Cronin A."/>
            <person name="Davis P."/>
            <person name="Feltwell T."/>
            <person name="Fraser A."/>
            <person name="Gentles S."/>
            <person name="Goble A."/>
            <person name="Hamlin N."/>
            <person name="Harris D.E."/>
            <person name="Hidalgo J."/>
            <person name="Hodgson G."/>
            <person name="Holroyd S."/>
            <person name="Hornsby T."/>
            <person name="Howarth S."/>
            <person name="Huckle E.J."/>
            <person name="Hunt S."/>
            <person name="Jagels K."/>
            <person name="James K.D."/>
            <person name="Jones L."/>
            <person name="Jones M."/>
            <person name="Leather S."/>
            <person name="McDonald S."/>
            <person name="McLean J."/>
            <person name="Mooney P."/>
            <person name="Moule S."/>
            <person name="Mungall K.L."/>
            <person name="Murphy L.D."/>
            <person name="Niblett D."/>
            <person name="Odell C."/>
            <person name="Oliver K."/>
            <person name="O'Neil S."/>
            <person name="Pearson D."/>
            <person name="Quail M.A."/>
            <person name="Rabbinowitsch E."/>
            <person name="Rutherford K.M."/>
            <person name="Rutter S."/>
            <person name="Saunders D."/>
            <person name="Seeger K."/>
            <person name="Sharp S."/>
            <person name="Skelton J."/>
            <person name="Simmonds M.N."/>
            <person name="Squares R."/>
            <person name="Squares S."/>
            <person name="Stevens K."/>
            <person name="Taylor K."/>
            <person name="Taylor R.G."/>
            <person name="Tivey A."/>
            <person name="Walsh S.V."/>
            <person name="Warren T."/>
            <person name="Whitehead S."/>
            <person name="Woodward J.R."/>
            <person name="Volckaert G."/>
            <person name="Aert R."/>
            <person name="Robben J."/>
            <person name="Grymonprez B."/>
            <person name="Weltjens I."/>
            <person name="Vanstreels E."/>
            <person name="Rieger M."/>
            <person name="Schaefer M."/>
            <person name="Mueller-Auer S."/>
            <person name="Gabel C."/>
            <person name="Fuchs M."/>
            <person name="Duesterhoeft A."/>
            <person name="Fritzc C."/>
            <person name="Holzer E."/>
            <person name="Moestl D."/>
            <person name="Hilbert H."/>
            <person name="Borzym K."/>
            <person name="Langer I."/>
            <person name="Beck A."/>
            <person name="Lehrach H."/>
            <person name="Reinhardt R."/>
            <person name="Pohl T.M."/>
            <person name="Eger P."/>
            <person name="Zimmermann W."/>
            <person name="Wedler H."/>
            <person name="Wambutt R."/>
            <person name="Purnelle B."/>
            <person name="Goffeau A."/>
            <person name="Cadieu E."/>
            <person name="Dreano S."/>
            <person name="Gloux S."/>
            <person name="Lelaure V."/>
            <person name="Mottier S."/>
            <person name="Galibert F."/>
            <person name="Aves S.J."/>
            <person name="Xiang Z."/>
            <person name="Hunt C."/>
            <person name="Moore K."/>
            <person name="Hurst S.M."/>
            <person name="Lucas M."/>
            <person name="Rochet M."/>
            <person name="Gaillardin C."/>
            <person name="Tallada V.A."/>
            <person name="Garzon A."/>
            <person name="Thode G."/>
            <person name="Daga R.R."/>
            <person name="Cruzado L."/>
            <person name="Jimenez J."/>
            <person name="Sanchez M."/>
            <person name="del Rey F."/>
            <person name="Benito J."/>
            <person name="Dominguez A."/>
            <person name="Revuelta J.L."/>
            <person name="Moreno S."/>
            <person name="Armstrong J."/>
            <person name="Forsburg S.L."/>
            <person name="Cerutti L."/>
            <person name="Lowe T."/>
            <person name="McCombie W.R."/>
            <person name="Paulsen I."/>
            <person name="Potashkin J."/>
            <person name="Shpakovski G.V."/>
            <person name="Ussery D."/>
            <person name="Barrell B.G."/>
            <person name="Nurse P."/>
        </authorList>
    </citation>
    <scope>NUCLEOTIDE SEQUENCE [LARGE SCALE GENOMIC DNA]</scope>
    <source>
        <strain>972 / ATCC 24843</strain>
    </source>
</reference>
<reference evidence="5" key="2">
    <citation type="journal article" date="2006" name="Nat. Biotechnol.">
        <title>ORFeome cloning and global analysis of protein localization in the fission yeast Schizosaccharomyces pombe.</title>
        <authorList>
            <person name="Matsuyama A."/>
            <person name="Arai R."/>
            <person name="Yashiroda Y."/>
            <person name="Shirai A."/>
            <person name="Kamata A."/>
            <person name="Sekido S."/>
            <person name="Kobayashi Y."/>
            <person name="Hashimoto A."/>
            <person name="Hamamoto M."/>
            <person name="Hiraoka Y."/>
            <person name="Horinouchi S."/>
            <person name="Yoshida M."/>
        </authorList>
    </citation>
    <scope>SUBCELLULAR LOCATION [LARGE SCALE ANALYSIS]</scope>
</reference>
<gene>
    <name evidence="1" type="primary">utp22</name>
    <name type="ORF">SPBC776.08c</name>
</gene>
<protein>
    <recommendedName>
        <fullName>U3 small nucleolar RNA-associated protein 22</fullName>
        <shortName>U3 snoRNA-associated protein 22</shortName>
    </recommendedName>
</protein>
<organism>
    <name type="scientific">Schizosaccharomyces pombe (strain 972 / ATCC 24843)</name>
    <name type="common">Fission yeast</name>
    <dbReference type="NCBI Taxonomy" id="284812"/>
    <lineage>
        <taxon>Eukaryota</taxon>
        <taxon>Fungi</taxon>
        <taxon>Dikarya</taxon>
        <taxon>Ascomycota</taxon>
        <taxon>Taphrinomycotina</taxon>
        <taxon>Schizosaccharomycetes</taxon>
        <taxon>Schizosaccharomycetales</taxon>
        <taxon>Schizosaccharomycetaceae</taxon>
        <taxon>Schizosaccharomyces</taxon>
    </lineage>
</organism>
<proteinExistence type="inferred from homology"/>